<reference key="1">
    <citation type="journal article" date="2004" name="Nat. Biotechnol.">
        <title>Complete genome sequence of the metabolically versatile photosynthetic bacterium Rhodopseudomonas palustris.</title>
        <authorList>
            <person name="Larimer F.W."/>
            <person name="Chain P."/>
            <person name="Hauser L."/>
            <person name="Lamerdin J.E."/>
            <person name="Malfatti S."/>
            <person name="Do L."/>
            <person name="Land M.L."/>
            <person name="Pelletier D.A."/>
            <person name="Beatty J.T."/>
            <person name="Lang A.S."/>
            <person name="Tabita F.R."/>
            <person name="Gibson J.L."/>
            <person name="Hanson T.E."/>
            <person name="Bobst C."/>
            <person name="Torres y Torres J.L."/>
            <person name="Peres C."/>
            <person name="Harrison F.H."/>
            <person name="Gibson J."/>
            <person name="Harwood C.S."/>
        </authorList>
    </citation>
    <scope>NUCLEOTIDE SEQUENCE [LARGE SCALE GENOMIC DNA]</scope>
    <source>
        <strain>ATCC BAA-98 / CGA009</strain>
    </source>
</reference>
<sequence>MSRPPVVARTLPALRRALAELRKRNASVALVPTMGALHDGHLSLVRLAKRRADKVVVSVFVNPTQFAPHEDFGSYPRTFKADASKLAEENVDLIWNPDVKVMYPEGFASKILTEAPAVAGLEDSFRPHFFGGVTTVVGKLFIQCRPDVAIFGSKDFQQLRVVTRMAADLDLGVKVIGAPTVRERDGLAMSSRNVYLSAEERAIAPTLYRAMKEVAKRIKAGKTIASSLTAGAELITEAGFVLDYLEARHAETLAPIKSPKEGPIRLLVAAKLGKTRLIDNIAV</sequence>
<proteinExistence type="inferred from homology"/>
<organism>
    <name type="scientific">Rhodopseudomonas palustris (strain ATCC BAA-98 / CGA009)</name>
    <dbReference type="NCBI Taxonomy" id="258594"/>
    <lineage>
        <taxon>Bacteria</taxon>
        <taxon>Pseudomonadati</taxon>
        <taxon>Pseudomonadota</taxon>
        <taxon>Alphaproteobacteria</taxon>
        <taxon>Hyphomicrobiales</taxon>
        <taxon>Nitrobacteraceae</taxon>
        <taxon>Rhodopseudomonas</taxon>
    </lineage>
</organism>
<name>PANC_RHOPA</name>
<gene>
    <name evidence="1" type="primary">panC</name>
    <name type="ordered locus">RPA3155</name>
</gene>
<feature type="chain" id="PRO_0000305532" description="Pantothenate synthetase">
    <location>
        <begin position="1"/>
        <end position="283"/>
    </location>
</feature>
<feature type="active site" description="Proton donor" evidence="1">
    <location>
        <position position="41"/>
    </location>
</feature>
<feature type="binding site" evidence="1">
    <location>
        <begin position="34"/>
        <end position="41"/>
    </location>
    <ligand>
        <name>ATP</name>
        <dbReference type="ChEBI" id="CHEBI:30616"/>
    </ligand>
</feature>
<feature type="binding site" evidence="1">
    <location>
        <position position="65"/>
    </location>
    <ligand>
        <name>(R)-pantoate</name>
        <dbReference type="ChEBI" id="CHEBI:15980"/>
    </ligand>
</feature>
<feature type="binding site" evidence="1">
    <location>
        <position position="65"/>
    </location>
    <ligand>
        <name>beta-alanine</name>
        <dbReference type="ChEBI" id="CHEBI:57966"/>
    </ligand>
</feature>
<feature type="binding site" evidence="1">
    <location>
        <begin position="152"/>
        <end position="155"/>
    </location>
    <ligand>
        <name>ATP</name>
        <dbReference type="ChEBI" id="CHEBI:30616"/>
    </ligand>
</feature>
<feature type="binding site" evidence="1">
    <location>
        <position position="158"/>
    </location>
    <ligand>
        <name>(R)-pantoate</name>
        <dbReference type="ChEBI" id="CHEBI:15980"/>
    </ligand>
</feature>
<feature type="binding site" evidence="1">
    <location>
        <position position="181"/>
    </location>
    <ligand>
        <name>ATP</name>
        <dbReference type="ChEBI" id="CHEBI:30616"/>
    </ligand>
</feature>
<feature type="binding site" evidence="1">
    <location>
        <begin position="189"/>
        <end position="192"/>
    </location>
    <ligand>
        <name>ATP</name>
        <dbReference type="ChEBI" id="CHEBI:30616"/>
    </ligand>
</feature>
<keyword id="KW-0067">ATP-binding</keyword>
<keyword id="KW-0963">Cytoplasm</keyword>
<keyword id="KW-0436">Ligase</keyword>
<keyword id="KW-0547">Nucleotide-binding</keyword>
<keyword id="KW-0566">Pantothenate biosynthesis</keyword>
<evidence type="ECO:0000255" key="1">
    <source>
        <dbReference type="HAMAP-Rule" id="MF_00158"/>
    </source>
</evidence>
<dbReference type="EC" id="6.3.2.1" evidence="1"/>
<dbReference type="EMBL" id="BX572603">
    <property type="protein sequence ID" value="CAE28596.1"/>
    <property type="molecule type" value="Genomic_DNA"/>
</dbReference>
<dbReference type="RefSeq" id="WP_011158700.1">
    <property type="nucleotide sequence ID" value="NZ_CP116810.1"/>
</dbReference>
<dbReference type="SMR" id="Q6N528"/>
<dbReference type="STRING" id="258594.RPA3155"/>
<dbReference type="GeneID" id="66894237"/>
<dbReference type="eggNOG" id="COG0414">
    <property type="taxonomic scope" value="Bacteria"/>
</dbReference>
<dbReference type="HOGENOM" id="CLU_047148_0_2_5"/>
<dbReference type="PhylomeDB" id="Q6N528"/>
<dbReference type="UniPathway" id="UPA00028">
    <property type="reaction ID" value="UER00005"/>
</dbReference>
<dbReference type="GO" id="GO:0005829">
    <property type="term" value="C:cytosol"/>
    <property type="evidence" value="ECO:0007669"/>
    <property type="project" value="TreeGrafter"/>
</dbReference>
<dbReference type="GO" id="GO:0005524">
    <property type="term" value="F:ATP binding"/>
    <property type="evidence" value="ECO:0007669"/>
    <property type="project" value="UniProtKB-KW"/>
</dbReference>
<dbReference type="GO" id="GO:0004592">
    <property type="term" value="F:pantoate-beta-alanine ligase activity"/>
    <property type="evidence" value="ECO:0007669"/>
    <property type="project" value="UniProtKB-UniRule"/>
</dbReference>
<dbReference type="GO" id="GO:0015940">
    <property type="term" value="P:pantothenate biosynthetic process"/>
    <property type="evidence" value="ECO:0007669"/>
    <property type="project" value="UniProtKB-UniRule"/>
</dbReference>
<dbReference type="CDD" id="cd00560">
    <property type="entry name" value="PanC"/>
    <property type="match status" value="1"/>
</dbReference>
<dbReference type="FunFam" id="3.30.1300.10:FF:000001">
    <property type="entry name" value="Pantothenate synthetase"/>
    <property type="match status" value="1"/>
</dbReference>
<dbReference type="Gene3D" id="3.40.50.620">
    <property type="entry name" value="HUPs"/>
    <property type="match status" value="1"/>
</dbReference>
<dbReference type="Gene3D" id="3.30.1300.10">
    <property type="entry name" value="Pantoate-beta-alanine ligase, C-terminal domain"/>
    <property type="match status" value="1"/>
</dbReference>
<dbReference type="HAMAP" id="MF_00158">
    <property type="entry name" value="PanC"/>
    <property type="match status" value="1"/>
</dbReference>
<dbReference type="InterPro" id="IPR004821">
    <property type="entry name" value="Cyt_trans-like"/>
</dbReference>
<dbReference type="InterPro" id="IPR003721">
    <property type="entry name" value="Pantoate_ligase"/>
</dbReference>
<dbReference type="InterPro" id="IPR042176">
    <property type="entry name" value="Pantoate_ligase_C"/>
</dbReference>
<dbReference type="InterPro" id="IPR014729">
    <property type="entry name" value="Rossmann-like_a/b/a_fold"/>
</dbReference>
<dbReference type="NCBIfam" id="TIGR00125">
    <property type="entry name" value="cyt_tran_rel"/>
    <property type="match status" value="1"/>
</dbReference>
<dbReference type="NCBIfam" id="TIGR00018">
    <property type="entry name" value="panC"/>
    <property type="match status" value="1"/>
</dbReference>
<dbReference type="PANTHER" id="PTHR21299">
    <property type="entry name" value="CYTIDYLATE KINASE/PANTOATE-BETA-ALANINE LIGASE"/>
    <property type="match status" value="1"/>
</dbReference>
<dbReference type="PANTHER" id="PTHR21299:SF1">
    <property type="entry name" value="PANTOATE--BETA-ALANINE LIGASE"/>
    <property type="match status" value="1"/>
</dbReference>
<dbReference type="Pfam" id="PF02569">
    <property type="entry name" value="Pantoate_ligase"/>
    <property type="match status" value="1"/>
</dbReference>
<dbReference type="SUPFAM" id="SSF52374">
    <property type="entry name" value="Nucleotidylyl transferase"/>
    <property type="match status" value="1"/>
</dbReference>
<accession>Q6N528</accession>
<protein>
    <recommendedName>
        <fullName evidence="1">Pantothenate synthetase</fullName>
        <shortName evidence="1">PS</shortName>
        <ecNumber evidence="1">6.3.2.1</ecNumber>
    </recommendedName>
    <alternativeName>
        <fullName evidence="1">Pantoate--beta-alanine ligase</fullName>
    </alternativeName>
    <alternativeName>
        <fullName evidence="1">Pantoate-activating enzyme</fullName>
    </alternativeName>
</protein>
<comment type="function">
    <text evidence="1">Catalyzes the condensation of pantoate with beta-alanine in an ATP-dependent reaction via a pantoyl-adenylate intermediate.</text>
</comment>
<comment type="catalytic activity">
    <reaction evidence="1">
        <text>(R)-pantoate + beta-alanine + ATP = (R)-pantothenate + AMP + diphosphate + H(+)</text>
        <dbReference type="Rhea" id="RHEA:10912"/>
        <dbReference type="ChEBI" id="CHEBI:15378"/>
        <dbReference type="ChEBI" id="CHEBI:15980"/>
        <dbReference type="ChEBI" id="CHEBI:29032"/>
        <dbReference type="ChEBI" id="CHEBI:30616"/>
        <dbReference type="ChEBI" id="CHEBI:33019"/>
        <dbReference type="ChEBI" id="CHEBI:57966"/>
        <dbReference type="ChEBI" id="CHEBI:456215"/>
        <dbReference type="EC" id="6.3.2.1"/>
    </reaction>
</comment>
<comment type="pathway">
    <text evidence="1">Cofactor biosynthesis; (R)-pantothenate biosynthesis; (R)-pantothenate from (R)-pantoate and beta-alanine: step 1/1.</text>
</comment>
<comment type="subunit">
    <text evidence="1">Homodimer.</text>
</comment>
<comment type="subcellular location">
    <subcellularLocation>
        <location evidence="1">Cytoplasm</location>
    </subcellularLocation>
</comment>
<comment type="miscellaneous">
    <text evidence="1">The reaction proceeds by a bi uni uni bi ping pong mechanism.</text>
</comment>
<comment type="similarity">
    <text evidence="1">Belongs to the pantothenate synthetase family.</text>
</comment>